<comment type="function">
    <text evidence="1">Catalyzes the NAD-dependent oxidative cleavage of spermidine and the subsequent transfer of the butylamine moiety of spermidine to the epsilon-amino group of a specific lysine residue of the eIF-5A precursor protein to form the intermediate deoxyhypusine residue.</text>
</comment>
<comment type="catalytic activity">
    <reaction>
        <text>[eIF5A protein]-L-lysine + spermidine = [eIF5A protein]-deoxyhypusine + propane-1,3-diamine</text>
        <dbReference type="Rhea" id="RHEA:33299"/>
        <dbReference type="Rhea" id="RHEA-COMP:10143"/>
        <dbReference type="Rhea" id="RHEA-COMP:10144"/>
        <dbReference type="ChEBI" id="CHEBI:29969"/>
        <dbReference type="ChEBI" id="CHEBI:57484"/>
        <dbReference type="ChEBI" id="CHEBI:57834"/>
        <dbReference type="ChEBI" id="CHEBI:82657"/>
        <dbReference type="EC" id="2.5.1.46"/>
    </reaction>
</comment>
<comment type="cofactor">
    <cofactor evidence="1">
        <name>NAD(+)</name>
        <dbReference type="ChEBI" id="CHEBI:57540"/>
    </cofactor>
</comment>
<comment type="pathway">
    <text>Protein modification; eIF5A hypusination.</text>
</comment>
<comment type="similarity">
    <text evidence="2">Belongs to the deoxyhypusine synthase family.</text>
</comment>
<comment type="sequence caution" evidence="2">
    <conflict type="erroneous initiation">
        <sequence resource="EMBL-CDS" id="AAM29983"/>
    </conflict>
</comment>
<keyword id="KW-0386">Hypusine biosynthesis</keyword>
<keyword id="KW-0520">NAD</keyword>
<keyword id="KW-0808">Transferase</keyword>
<sequence>MHHNVFTNTPTIPIDVKDRSVSELMDGMLRTGFQGRKLAESVQAWSNMLKEKDTTVLMGLSGAMVPAGMRRVISYLIRERMIDCLVSTGANLFHDSHEALGRKHYVGSHLANDEKLFEHGVDRIYDVFAVEEEFRNADNLIADFAEEIGEISCSSREFMYLLGKELVRRGAAEDSIVVSAYRHNVPIFVPALSDSSIGIGLTIARRRGLKLEIDQIKDVDEITQIVEKSGHTGVVYVGGGVPKNFIQQTEVIASILGMDVPGHEYAIQYTSDSPHWGGLSGCTFDEAVSWGKVAAQAKKVQVFVDATIALPIVAHALHEKTRGVKRTAPVFSWDGPEGLEIAYNE</sequence>
<reference key="1">
    <citation type="journal article" date="2002" name="J. Mol. Microbiol. Biotechnol.">
        <title>The genome of Methanosarcina mazei: evidence for lateral gene transfer between Bacteria and Archaea.</title>
        <authorList>
            <person name="Deppenmeier U."/>
            <person name="Johann A."/>
            <person name="Hartsch T."/>
            <person name="Merkl R."/>
            <person name="Schmitz R.A."/>
            <person name="Martinez-Arias R."/>
            <person name="Henne A."/>
            <person name="Wiezer A."/>
            <person name="Baeumer S."/>
            <person name="Jacobi C."/>
            <person name="Brueggemann H."/>
            <person name="Lienard T."/>
            <person name="Christmann A."/>
            <person name="Boemecke M."/>
            <person name="Steckel S."/>
            <person name="Bhattacharyya A."/>
            <person name="Lykidis A."/>
            <person name="Overbeek R."/>
            <person name="Klenk H.-P."/>
            <person name="Gunsalus R.P."/>
            <person name="Fritz H.-J."/>
            <person name="Gottschalk G."/>
        </authorList>
    </citation>
    <scope>NUCLEOTIDE SEQUENCE [LARGE SCALE GENOMIC DNA]</scope>
    <source>
        <strain>ATCC BAA-159 / DSM 3647 / Goe1 / Go1 / JCM 11833 / OCM 88</strain>
    </source>
</reference>
<dbReference type="EC" id="2.5.1.46"/>
<dbReference type="EMBL" id="AE008384">
    <property type="protein sequence ID" value="AAM29983.1"/>
    <property type="status" value="ALT_INIT"/>
    <property type="molecule type" value="Genomic_DNA"/>
</dbReference>
<dbReference type="RefSeq" id="WP_015410997.1">
    <property type="nucleotide sequence ID" value="NC_003901.1"/>
</dbReference>
<dbReference type="SMR" id="Q8Q051"/>
<dbReference type="KEGG" id="mma:MM_0287"/>
<dbReference type="PATRIC" id="fig|192952.21.peg.354"/>
<dbReference type="eggNOG" id="arCOG04142">
    <property type="taxonomic scope" value="Archaea"/>
</dbReference>
<dbReference type="HOGENOM" id="CLU_039781_1_0_2"/>
<dbReference type="UniPathway" id="UPA00354"/>
<dbReference type="Proteomes" id="UP000000595">
    <property type="component" value="Chromosome"/>
</dbReference>
<dbReference type="GO" id="GO:0005737">
    <property type="term" value="C:cytoplasm"/>
    <property type="evidence" value="ECO:0007669"/>
    <property type="project" value="TreeGrafter"/>
</dbReference>
<dbReference type="GO" id="GO:0034038">
    <property type="term" value="F:deoxyhypusine synthase activity"/>
    <property type="evidence" value="ECO:0007669"/>
    <property type="project" value="UniProtKB-UniRule"/>
</dbReference>
<dbReference type="FunFam" id="3.40.910.10:FF:000006">
    <property type="entry name" value="Probable deoxyhypusine synthase"/>
    <property type="match status" value="1"/>
</dbReference>
<dbReference type="Gene3D" id="3.40.910.10">
    <property type="entry name" value="Deoxyhypusine synthase"/>
    <property type="match status" value="1"/>
</dbReference>
<dbReference type="HAMAP" id="MF_00153">
    <property type="entry name" value="DHS"/>
    <property type="match status" value="1"/>
</dbReference>
<dbReference type="InterPro" id="IPR022899">
    <property type="entry name" value="Deoxyhypus_synthase_arc"/>
</dbReference>
<dbReference type="InterPro" id="IPR002773">
    <property type="entry name" value="Deoxyhypusine_synthase"/>
</dbReference>
<dbReference type="InterPro" id="IPR036982">
    <property type="entry name" value="Deoxyhypusine_synthase_sf"/>
</dbReference>
<dbReference type="InterPro" id="IPR029035">
    <property type="entry name" value="DHS-like_NAD/FAD-binding_dom"/>
</dbReference>
<dbReference type="NCBIfam" id="TIGR00321">
    <property type="entry name" value="dhys"/>
    <property type="match status" value="1"/>
</dbReference>
<dbReference type="NCBIfam" id="NF002006">
    <property type="entry name" value="PRK00805.1"/>
    <property type="match status" value="1"/>
</dbReference>
<dbReference type="PANTHER" id="PTHR11703">
    <property type="entry name" value="DEOXYHYPUSINE SYNTHASE"/>
    <property type="match status" value="1"/>
</dbReference>
<dbReference type="PANTHER" id="PTHR11703:SF2">
    <property type="entry name" value="DEOXYHYPUSINE SYNTHASE-LIKE PROTEIN"/>
    <property type="match status" value="1"/>
</dbReference>
<dbReference type="Pfam" id="PF01916">
    <property type="entry name" value="DS"/>
    <property type="match status" value="1"/>
</dbReference>
<dbReference type="SUPFAM" id="SSF52467">
    <property type="entry name" value="DHS-like NAD/FAD-binding domain"/>
    <property type="match status" value="1"/>
</dbReference>
<evidence type="ECO:0000250" key="1"/>
<evidence type="ECO:0000305" key="2"/>
<organism>
    <name type="scientific">Methanosarcina mazei (strain ATCC BAA-159 / DSM 3647 / Goe1 / Go1 / JCM 11833 / OCM 88)</name>
    <name type="common">Methanosarcina frisia</name>
    <dbReference type="NCBI Taxonomy" id="192952"/>
    <lineage>
        <taxon>Archaea</taxon>
        <taxon>Methanobacteriati</taxon>
        <taxon>Methanobacteriota</taxon>
        <taxon>Stenosarchaea group</taxon>
        <taxon>Methanomicrobia</taxon>
        <taxon>Methanosarcinales</taxon>
        <taxon>Methanosarcinaceae</taxon>
        <taxon>Methanosarcina</taxon>
    </lineage>
</organism>
<gene>
    <name type="primary">dys2</name>
    <name type="ordered locus">MM_0287</name>
</gene>
<proteinExistence type="inferred from homology"/>
<feature type="chain" id="PRO_0000134498" description="Probable deoxyhypusine synthase 2">
    <location>
        <begin position="1"/>
        <end position="345"/>
    </location>
</feature>
<feature type="active site" description="Nucleophile" evidence="1">
    <location>
        <position position="292"/>
    </location>
</feature>
<accession>Q8Q051</accession>
<name>DHYS2_METMA</name>
<protein>
    <recommendedName>
        <fullName>Probable deoxyhypusine synthase 2</fullName>
        <shortName>DHS 2</shortName>
        <ecNumber>2.5.1.46</ecNumber>
    </recommendedName>
</protein>